<proteinExistence type="inferred from homology"/>
<feature type="chain" id="PRO_1000198681" description="Pyrimidine/purine nucleoside phosphorylase">
    <location>
        <begin position="1"/>
        <end position="93"/>
    </location>
</feature>
<protein>
    <recommendedName>
        <fullName evidence="1">Pyrimidine/purine nucleoside phosphorylase</fullName>
        <ecNumber evidence="1">2.4.2.1</ecNumber>
        <ecNumber evidence="1">2.4.2.2</ecNumber>
    </recommendedName>
    <alternativeName>
        <fullName evidence="1">Adenosine phosphorylase</fullName>
    </alternativeName>
    <alternativeName>
        <fullName evidence="1">Cytidine phosphorylase</fullName>
    </alternativeName>
    <alternativeName>
        <fullName evidence="1">Guanosine phosphorylase</fullName>
    </alternativeName>
    <alternativeName>
        <fullName evidence="1">Inosine phosphorylase</fullName>
    </alternativeName>
    <alternativeName>
        <fullName evidence="1">Thymidine phosphorylase</fullName>
    </alternativeName>
    <alternativeName>
        <fullName evidence="1">Uridine phosphorylase</fullName>
    </alternativeName>
    <alternativeName>
        <fullName evidence="1">Xanthosine phosphorylase</fullName>
    </alternativeName>
</protein>
<evidence type="ECO:0000255" key="1">
    <source>
        <dbReference type="HAMAP-Rule" id="MF_01537"/>
    </source>
</evidence>
<organism>
    <name type="scientific">Shewanella halifaxensis (strain HAW-EB4)</name>
    <dbReference type="NCBI Taxonomy" id="458817"/>
    <lineage>
        <taxon>Bacteria</taxon>
        <taxon>Pseudomonadati</taxon>
        <taxon>Pseudomonadota</taxon>
        <taxon>Gammaproteobacteria</taxon>
        <taxon>Alteromonadales</taxon>
        <taxon>Shewanellaceae</taxon>
        <taxon>Shewanella</taxon>
    </lineage>
</organism>
<gene>
    <name evidence="1" type="primary">ppnP</name>
    <name type="ordered locus">Shal_3756</name>
</gene>
<keyword id="KW-0328">Glycosyltransferase</keyword>
<keyword id="KW-0808">Transferase</keyword>
<sequence>MLAVNEYFEGQVKSISFDGAEKPASVGVMEVGDYEFGTAAPEVMQVISGALTVMLPGQTEWQTFNAGEQFDVIGNAKFQVKVETQTAYLCIYG</sequence>
<name>PPNP_SHEHH</name>
<reference key="1">
    <citation type="submission" date="2008-01" db="EMBL/GenBank/DDBJ databases">
        <title>Complete sequence of Shewanella halifaxensis HAW-EB4.</title>
        <authorList>
            <consortium name="US DOE Joint Genome Institute"/>
            <person name="Copeland A."/>
            <person name="Lucas S."/>
            <person name="Lapidus A."/>
            <person name="Glavina del Rio T."/>
            <person name="Dalin E."/>
            <person name="Tice H."/>
            <person name="Bruce D."/>
            <person name="Goodwin L."/>
            <person name="Pitluck S."/>
            <person name="Sims D."/>
            <person name="Brettin T."/>
            <person name="Detter J.C."/>
            <person name="Han C."/>
            <person name="Kuske C.R."/>
            <person name="Schmutz J."/>
            <person name="Larimer F."/>
            <person name="Land M."/>
            <person name="Hauser L."/>
            <person name="Kyrpides N."/>
            <person name="Kim E."/>
            <person name="Zhao J.-S."/>
            <person name="Richardson P."/>
        </authorList>
    </citation>
    <scope>NUCLEOTIDE SEQUENCE [LARGE SCALE GENOMIC DNA]</scope>
    <source>
        <strain>HAW-EB4</strain>
    </source>
</reference>
<dbReference type="EC" id="2.4.2.1" evidence="1"/>
<dbReference type="EC" id="2.4.2.2" evidence="1"/>
<dbReference type="EMBL" id="CP000931">
    <property type="protein sequence ID" value="ABZ78296.1"/>
    <property type="molecule type" value="Genomic_DNA"/>
</dbReference>
<dbReference type="RefSeq" id="WP_012278814.1">
    <property type="nucleotide sequence ID" value="NC_010334.1"/>
</dbReference>
<dbReference type="SMR" id="B0TV29"/>
<dbReference type="STRING" id="458817.Shal_3756"/>
<dbReference type="KEGG" id="shl:Shal_3756"/>
<dbReference type="eggNOG" id="COG3123">
    <property type="taxonomic scope" value="Bacteria"/>
</dbReference>
<dbReference type="HOGENOM" id="CLU_157874_0_0_6"/>
<dbReference type="OrthoDB" id="9793848at2"/>
<dbReference type="Proteomes" id="UP000001317">
    <property type="component" value="Chromosome"/>
</dbReference>
<dbReference type="GO" id="GO:0005829">
    <property type="term" value="C:cytosol"/>
    <property type="evidence" value="ECO:0007669"/>
    <property type="project" value="TreeGrafter"/>
</dbReference>
<dbReference type="GO" id="GO:0047975">
    <property type="term" value="F:guanosine phosphorylase activity"/>
    <property type="evidence" value="ECO:0007669"/>
    <property type="project" value="UniProtKB-EC"/>
</dbReference>
<dbReference type="GO" id="GO:0004731">
    <property type="term" value="F:purine-nucleoside phosphorylase activity"/>
    <property type="evidence" value="ECO:0007669"/>
    <property type="project" value="UniProtKB-UniRule"/>
</dbReference>
<dbReference type="GO" id="GO:0009032">
    <property type="term" value="F:thymidine phosphorylase activity"/>
    <property type="evidence" value="ECO:0007669"/>
    <property type="project" value="UniProtKB-EC"/>
</dbReference>
<dbReference type="GO" id="GO:0004850">
    <property type="term" value="F:uridine phosphorylase activity"/>
    <property type="evidence" value="ECO:0007669"/>
    <property type="project" value="UniProtKB-EC"/>
</dbReference>
<dbReference type="CDD" id="cd20296">
    <property type="entry name" value="cupin_PpnP-like"/>
    <property type="match status" value="1"/>
</dbReference>
<dbReference type="FunFam" id="2.60.120.10:FF:000016">
    <property type="entry name" value="Pyrimidine/purine nucleoside phosphorylase"/>
    <property type="match status" value="1"/>
</dbReference>
<dbReference type="Gene3D" id="2.60.120.10">
    <property type="entry name" value="Jelly Rolls"/>
    <property type="match status" value="1"/>
</dbReference>
<dbReference type="HAMAP" id="MF_01537">
    <property type="entry name" value="Nucleos_phosphorylase_PpnP"/>
    <property type="match status" value="1"/>
</dbReference>
<dbReference type="InterPro" id="IPR009664">
    <property type="entry name" value="Ppnp"/>
</dbReference>
<dbReference type="InterPro" id="IPR014710">
    <property type="entry name" value="RmlC-like_jellyroll"/>
</dbReference>
<dbReference type="InterPro" id="IPR011051">
    <property type="entry name" value="RmlC_Cupin_sf"/>
</dbReference>
<dbReference type="PANTHER" id="PTHR36540">
    <property type="entry name" value="PYRIMIDINE/PURINE NUCLEOSIDE PHOSPHORYLASE"/>
    <property type="match status" value="1"/>
</dbReference>
<dbReference type="PANTHER" id="PTHR36540:SF1">
    <property type="entry name" value="PYRIMIDINE_PURINE NUCLEOSIDE PHOSPHORYLASE"/>
    <property type="match status" value="1"/>
</dbReference>
<dbReference type="Pfam" id="PF06865">
    <property type="entry name" value="Ppnp"/>
    <property type="match status" value="1"/>
</dbReference>
<dbReference type="SUPFAM" id="SSF51182">
    <property type="entry name" value="RmlC-like cupins"/>
    <property type="match status" value="1"/>
</dbReference>
<accession>B0TV29</accession>
<comment type="function">
    <text evidence="1">Catalyzes the phosphorolysis of diverse nucleosides, yielding D-ribose 1-phosphate and the respective free bases. Can use uridine, adenosine, guanosine, cytidine, thymidine, inosine and xanthosine as substrates. Also catalyzes the reverse reactions.</text>
</comment>
<comment type="catalytic activity">
    <reaction evidence="1">
        <text>a purine D-ribonucleoside + phosphate = a purine nucleobase + alpha-D-ribose 1-phosphate</text>
        <dbReference type="Rhea" id="RHEA:19805"/>
        <dbReference type="ChEBI" id="CHEBI:26386"/>
        <dbReference type="ChEBI" id="CHEBI:43474"/>
        <dbReference type="ChEBI" id="CHEBI:57720"/>
        <dbReference type="ChEBI" id="CHEBI:142355"/>
        <dbReference type="EC" id="2.4.2.1"/>
    </reaction>
</comment>
<comment type="catalytic activity">
    <reaction evidence="1">
        <text>adenosine + phosphate = alpha-D-ribose 1-phosphate + adenine</text>
        <dbReference type="Rhea" id="RHEA:27642"/>
        <dbReference type="ChEBI" id="CHEBI:16335"/>
        <dbReference type="ChEBI" id="CHEBI:16708"/>
        <dbReference type="ChEBI" id="CHEBI:43474"/>
        <dbReference type="ChEBI" id="CHEBI:57720"/>
        <dbReference type="EC" id="2.4.2.1"/>
    </reaction>
</comment>
<comment type="catalytic activity">
    <reaction evidence="1">
        <text>cytidine + phosphate = cytosine + alpha-D-ribose 1-phosphate</text>
        <dbReference type="Rhea" id="RHEA:52540"/>
        <dbReference type="ChEBI" id="CHEBI:16040"/>
        <dbReference type="ChEBI" id="CHEBI:17562"/>
        <dbReference type="ChEBI" id="CHEBI:43474"/>
        <dbReference type="ChEBI" id="CHEBI:57720"/>
        <dbReference type="EC" id="2.4.2.2"/>
    </reaction>
</comment>
<comment type="catalytic activity">
    <reaction evidence="1">
        <text>guanosine + phosphate = alpha-D-ribose 1-phosphate + guanine</text>
        <dbReference type="Rhea" id="RHEA:13233"/>
        <dbReference type="ChEBI" id="CHEBI:16235"/>
        <dbReference type="ChEBI" id="CHEBI:16750"/>
        <dbReference type="ChEBI" id="CHEBI:43474"/>
        <dbReference type="ChEBI" id="CHEBI:57720"/>
        <dbReference type="EC" id="2.4.2.1"/>
    </reaction>
</comment>
<comment type="catalytic activity">
    <reaction evidence="1">
        <text>inosine + phosphate = alpha-D-ribose 1-phosphate + hypoxanthine</text>
        <dbReference type="Rhea" id="RHEA:27646"/>
        <dbReference type="ChEBI" id="CHEBI:17368"/>
        <dbReference type="ChEBI" id="CHEBI:17596"/>
        <dbReference type="ChEBI" id="CHEBI:43474"/>
        <dbReference type="ChEBI" id="CHEBI:57720"/>
        <dbReference type="EC" id="2.4.2.1"/>
    </reaction>
</comment>
<comment type="catalytic activity">
    <reaction evidence="1">
        <text>thymidine + phosphate = 2-deoxy-alpha-D-ribose 1-phosphate + thymine</text>
        <dbReference type="Rhea" id="RHEA:16037"/>
        <dbReference type="ChEBI" id="CHEBI:17748"/>
        <dbReference type="ChEBI" id="CHEBI:17821"/>
        <dbReference type="ChEBI" id="CHEBI:43474"/>
        <dbReference type="ChEBI" id="CHEBI:57259"/>
        <dbReference type="EC" id="2.4.2.2"/>
    </reaction>
</comment>
<comment type="catalytic activity">
    <reaction evidence="1">
        <text>uridine + phosphate = alpha-D-ribose 1-phosphate + uracil</text>
        <dbReference type="Rhea" id="RHEA:24388"/>
        <dbReference type="ChEBI" id="CHEBI:16704"/>
        <dbReference type="ChEBI" id="CHEBI:17568"/>
        <dbReference type="ChEBI" id="CHEBI:43474"/>
        <dbReference type="ChEBI" id="CHEBI:57720"/>
        <dbReference type="EC" id="2.4.2.2"/>
    </reaction>
</comment>
<comment type="catalytic activity">
    <reaction evidence="1">
        <text>xanthosine + phosphate = alpha-D-ribose 1-phosphate + xanthine</text>
        <dbReference type="Rhea" id="RHEA:27638"/>
        <dbReference type="ChEBI" id="CHEBI:17712"/>
        <dbReference type="ChEBI" id="CHEBI:18107"/>
        <dbReference type="ChEBI" id="CHEBI:43474"/>
        <dbReference type="ChEBI" id="CHEBI:57720"/>
        <dbReference type="EC" id="2.4.2.1"/>
    </reaction>
</comment>
<comment type="similarity">
    <text evidence="1">Belongs to the nucleoside phosphorylase PpnP family.</text>
</comment>